<feature type="chain" id="PRO_0000338361" description="CBL-interacting protein kinase 3">
    <location>
        <begin position="1"/>
        <end position="445"/>
    </location>
</feature>
<feature type="domain" description="Protein kinase" evidence="2">
    <location>
        <begin position="19"/>
        <end position="274"/>
    </location>
</feature>
<feature type="domain" description="NAF" evidence="3">
    <location>
        <begin position="309"/>
        <end position="336"/>
    </location>
</feature>
<feature type="region of interest" description="Activation loop" evidence="1">
    <location>
        <begin position="160"/>
        <end position="189"/>
    </location>
</feature>
<feature type="region of interest" description="PPI" evidence="1">
    <location>
        <begin position="342"/>
        <end position="371"/>
    </location>
</feature>
<feature type="active site" description="Proton acceptor" evidence="2 4">
    <location>
        <position position="142"/>
    </location>
</feature>
<feature type="binding site" evidence="2">
    <location>
        <begin position="25"/>
        <end position="33"/>
    </location>
    <ligand>
        <name>ATP</name>
        <dbReference type="ChEBI" id="CHEBI:30616"/>
    </ligand>
</feature>
<feature type="binding site" evidence="2">
    <location>
        <position position="48"/>
    </location>
    <ligand>
        <name>ATP</name>
        <dbReference type="ChEBI" id="CHEBI:30616"/>
    </ligand>
</feature>
<comment type="function">
    <text evidence="1">CIPK serine-threonine protein kinases interact with CBL proteins. Binding of a CBL protein to the regulatory NAF domain of CIPK protein lead to the activation of the kinase in a calcium-dependent manner (By similarity).</text>
</comment>
<comment type="catalytic activity">
    <reaction>
        <text>L-seryl-[protein] + ATP = O-phospho-L-seryl-[protein] + ADP + H(+)</text>
        <dbReference type="Rhea" id="RHEA:17989"/>
        <dbReference type="Rhea" id="RHEA-COMP:9863"/>
        <dbReference type="Rhea" id="RHEA-COMP:11604"/>
        <dbReference type="ChEBI" id="CHEBI:15378"/>
        <dbReference type="ChEBI" id="CHEBI:29999"/>
        <dbReference type="ChEBI" id="CHEBI:30616"/>
        <dbReference type="ChEBI" id="CHEBI:83421"/>
        <dbReference type="ChEBI" id="CHEBI:456216"/>
        <dbReference type="EC" id="2.7.11.1"/>
    </reaction>
</comment>
<comment type="catalytic activity">
    <reaction>
        <text>L-threonyl-[protein] + ATP = O-phospho-L-threonyl-[protein] + ADP + H(+)</text>
        <dbReference type="Rhea" id="RHEA:46608"/>
        <dbReference type="Rhea" id="RHEA-COMP:11060"/>
        <dbReference type="Rhea" id="RHEA-COMP:11605"/>
        <dbReference type="ChEBI" id="CHEBI:15378"/>
        <dbReference type="ChEBI" id="CHEBI:30013"/>
        <dbReference type="ChEBI" id="CHEBI:30616"/>
        <dbReference type="ChEBI" id="CHEBI:61977"/>
        <dbReference type="ChEBI" id="CHEBI:456216"/>
        <dbReference type="EC" id="2.7.11.1"/>
    </reaction>
</comment>
<comment type="cofactor">
    <cofactor evidence="1">
        <name>Mn(2+)</name>
        <dbReference type="ChEBI" id="CHEBI:29035"/>
    </cofactor>
</comment>
<comment type="domain">
    <text evidence="1">The activation loop within the kinase domain is the target of phosphorylation/activation by upstream protein kinases. The PPI motif mediates the interaction with the ABI (abscisic acid-insensitive) phosphatases (By similarity).</text>
</comment>
<comment type="similarity">
    <text evidence="5">Belongs to the protein kinase superfamily. CAMK Ser/Thr protein kinase family. SNF1 subfamily.</text>
</comment>
<comment type="sequence caution" evidence="5">
    <conflict type="erroneous gene model prediction">
        <sequence resource="EMBL-CDS" id="BAF22603"/>
    </conflict>
</comment>
<protein>
    <recommendedName>
        <fullName>CBL-interacting protein kinase 3</fullName>
        <ecNumber>2.7.11.1</ecNumber>
    </recommendedName>
    <alternativeName>
        <fullName>OsCIPK03</fullName>
    </alternativeName>
</protein>
<proteinExistence type="evidence at transcript level"/>
<keyword id="KW-0067">ATP-binding</keyword>
<keyword id="KW-0418">Kinase</keyword>
<keyword id="KW-0464">Manganese</keyword>
<keyword id="KW-0547">Nucleotide-binding</keyword>
<keyword id="KW-1185">Reference proteome</keyword>
<keyword id="KW-0723">Serine/threonine-protein kinase</keyword>
<keyword id="KW-0808">Transferase</keyword>
<dbReference type="EC" id="2.7.11.1"/>
<dbReference type="EMBL" id="AP003813">
    <property type="protein sequence ID" value="BAD30291.1"/>
    <property type="molecule type" value="Genomic_DNA"/>
</dbReference>
<dbReference type="EMBL" id="AP003818">
    <property type="protein sequence ID" value="BAC10350.1"/>
    <property type="molecule type" value="Genomic_DNA"/>
</dbReference>
<dbReference type="EMBL" id="AP008213">
    <property type="protein sequence ID" value="BAF22603.2"/>
    <property type="status" value="ALT_SEQ"/>
    <property type="molecule type" value="Genomic_DNA"/>
</dbReference>
<dbReference type="EMBL" id="AP014963">
    <property type="protein sequence ID" value="BAT03298.1"/>
    <property type="molecule type" value="Genomic_DNA"/>
</dbReference>
<dbReference type="EMBL" id="CM000144">
    <property type="protein sequence ID" value="EAZ41146.1"/>
    <property type="molecule type" value="Genomic_DNA"/>
</dbReference>
<dbReference type="RefSeq" id="XP_015646748.1">
    <property type="nucleotide sequence ID" value="XM_015791262.1"/>
</dbReference>
<dbReference type="SMR" id="Q8LIG4"/>
<dbReference type="FunCoup" id="Q8LIG4">
    <property type="interactions" value="464"/>
</dbReference>
<dbReference type="STRING" id="39947.Q8LIG4"/>
<dbReference type="PaxDb" id="39947-Q8LIG4"/>
<dbReference type="EnsemblPlants" id="Os07t0687000-01">
    <property type="protein sequence ID" value="Os07t0687000-01"/>
    <property type="gene ID" value="Os07g0687000"/>
</dbReference>
<dbReference type="Gramene" id="Os07t0687000-01">
    <property type="protein sequence ID" value="Os07t0687000-01"/>
    <property type="gene ID" value="Os07g0687000"/>
</dbReference>
<dbReference type="KEGG" id="dosa:Os07g0687000"/>
<dbReference type="eggNOG" id="KOG0583">
    <property type="taxonomic scope" value="Eukaryota"/>
</dbReference>
<dbReference type="HOGENOM" id="CLU_000288_59_0_1"/>
<dbReference type="InParanoid" id="Q8LIG4"/>
<dbReference type="OMA" id="KNYRMRM"/>
<dbReference type="OrthoDB" id="193931at2759"/>
<dbReference type="Proteomes" id="UP000000763">
    <property type="component" value="Chromosome 7"/>
</dbReference>
<dbReference type="Proteomes" id="UP000007752">
    <property type="component" value="Chromosome 7"/>
</dbReference>
<dbReference type="Proteomes" id="UP000059680">
    <property type="component" value="Chromosome 7"/>
</dbReference>
<dbReference type="GO" id="GO:0005524">
    <property type="term" value="F:ATP binding"/>
    <property type="evidence" value="ECO:0007669"/>
    <property type="project" value="UniProtKB-KW"/>
</dbReference>
<dbReference type="GO" id="GO:0106310">
    <property type="term" value="F:protein serine kinase activity"/>
    <property type="evidence" value="ECO:0007669"/>
    <property type="project" value="RHEA"/>
</dbReference>
<dbReference type="GO" id="GO:0004674">
    <property type="term" value="F:protein serine/threonine kinase activity"/>
    <property type="evidence" value="ECO:0000318"/>
    <property type="project" value="GO_Central"/>
</dbReference>
<dbReference type="GO" id="GO:0007165">
    <property type="term" value="P:signal transduction"/>
    <property type="evidence" value="ECO:0007669"/>
    <property type="project" value="InterPro"/>
</dbReference>
<dbReference type="CDD" id="cd12195">
    <property type="entry name" value="CIPK_C"/>
    <property type="match status" value="1"/>
</dbReference>
<dbReference type="CDD" id="cd14663">
    <property type="entry name" value="STKc_SnRK3"/>
    <property type="match status" value="1"/>
</dbReference>
<dbReference type="FunFam" id="1.10.510.10:FF:000279">
    <property type="entry name" value="Non-specific serine/threonine protein kinase"/>
    <property type="match status" value="1"/>
</dbReference>
<dbReference type="FunFam" id="3.30.200.20:FF:000096">
    <property type="entry name" value="Non-specific serine/threonine protein kinase"/>
    <property type="match status" value="1"/>
</dbReference>
<dbReference type="FunFam" id="3.30.310.80:FF:000002">
    <property type="entry name" value="Non-specific serine/threonine protein kinase"/>
    <property type="match status" value="1"/>
</dbReference>
<dbReference type="Gene3D" id="3.30.310.80">
    <property type="entry name" value="Kinase associated domain 1, KA1"/>
    <property type="match status" value="1"/>
</dbReference>
<dbReference type="Gene3D" id="3.30.200.20">
    <property type="entry name" value="Phosphorylase Kinase, domain 1"/>
    <property type="match status" value="1"/>
</dbReference>
<dbReference type="Gene3D" id="1.10.510.10">
    <property type="entry name" value="Transferase(Phosphotransferase) domain 1"/>
    <property type="match status" value="1"/>
</dbReference>
<dbReference type="InterPro" id="IPR011009">
    <property type="entry name" value="Kinase-like_dom_sf"/>
</dbReference>
<dbReference type="InterPro" id="IPR018451">
    <property type="entry name" value="NAF/FISL_domain"/>
</dbReference>
<dbReference type="InterPro" id="IPR004041">
    <property type="entry name" value="NAF_dom"/>
</dbReference>
<dbReference type="InterPro" id="IPR000719">
    <property type="entry name" value="Prot_kinase_dom"/>
</dbReference>
<dbReference type="InterPro" id="IPR017441">
    <property type="entry name" value="Protein_kinase_ATP_BS"/>
</dbReference>
<dbReference type="InterPro" id="IPR008271">
    <property type="entry name" value="Ser/Thr_kinase_AS"/>
</dbReference>
<dbReference type="PANTHER" id="PTHR43895">
    <property type="entry name" value="CALCIUM/CALMODULIN-DEPENDENT PROTEIN KINASE KINASE-RELATED"/>
    <property type="match status" value="1"/>
</dbReference>
<dbReference type="PANTHER" id="PTHR43895:SF168">
    <property type="entry name" value="NON-SPECIFIC SERINE_THREONINE PROTEIN KINASE"/>
    <property type="match status" value="1"/>
</dbReference>
<dbReference type="Pfam" id="PF03822">
    <property type="entry name" value="NAF"/>
    <property type="match status" value="1"/>
</dbReference>
<dbReference type="Pfam" id="PF00069">
    <property type="entry name" value="Pkinase"/>
    <property type="match status" value="1"/>
</dbReference>
<dbReference type="SMART" id="SM00220">
    <property type="entry name" value="S_TKc"/>
    <property type="match status" value="1"/>
</dbReference>
<dbReference type="SUPFAM" id="SSF56112">
    <property type="entry name" value="Protein kinase-like (PK-like)"/>
    <property type="match status" value="1"/>
</dbReference>
<dbReference type="PROSITE" id="PS50816">
    <property type="entry name" value="NAF"/>
    <property type="match status" value="1"/>
</dbReference>
<dbReference type="PROSITE" id="PS00107">
    <property type="entry name" value="PROTEIN_KINASE_ATP"/>
    <property type="match status" value="1"/>
</dbReference>
<dbReference type="PROSITE" id="PS50011">
    <property type="entry name" value="PROTEIN_KINASE_DOM"/>
    <property type="match status" value="1"/>
</dbReference>
<dbReference type="PROSITE" id="PS00108">
    <property type="entry name" value="PROTEIN_KINASE_ST"/>
    <property type="match status" value="1"/>
</dbReference>
<name>CIPK3_ORYSJ</name>
<sequence>MYKAKRTAAQKVRRCLGKYELGRAIGQGTFAKVRFAKNMETGDHVAIKILDKAKVQKHRLVEQIRREICTMKLIQHPNVVHLHEVMGSKTRIFIVLEYVMGGELHDIIATSGRLKEDEARKYFQQLINAVDYCHSRGVYHRDLKLENLLLDTAGNIKVSDFGLSAISEQVKADGLLHTTCGTPNYVAPEVIEDKGYDGALADLWSCGVILFVLLAGYLPFEDENIVSLYNKISGAQFTCPSWFSAEAKRLIARILDPNPATRITTSQVLQDQWFKKGYESPVFDDKYYPYFHDVYDAFGDSEEKHVKEAMEEQPTLMNAFELISLNKGLNLDNFFESDKKYKRETRFTSQCPPKEIINRIEEAANLLGFNIQKRNYRMRMENIKEGRKGHLNIATEVFQVAPSLHVVELKKAKGDTLEFQKFYQTLSTQLKDVVWELEDAAEDMS</sequence>
<gene>
    <name type="primary">CIPK3</name>
    <name type="ordered locus">Os07g0687000</name>
    <name type="ordered locus">LOC_Os07g48760</name>
    <name type="ORF">OJ1150_E04.118</name>
    <name type="ORF">OJ1200_C08.122</name>
    <name type="ORF">OsJ_024629</name>
</gene>
<organism>
    <name type="scientific">Oryza sativa subsp. japonica</name>
    <name type="common">Rice</name>
    <dbReference type="NCBI Taxonomy" id="39947"/>
    <lineage>
        <taxon>Eukaryota</taxon>
        <taxon>Viridiplantae</taxon>
        <taxon>Streptophyta</taxon>
        <taxon>Embryophyta</taxon>
        <taxon>Tracheophyta</taxon>
        <taxon>Spermatophyta</taxon>
        <taxon>Magnoliopsida</taxon>
        <taxon>Liliopsida</taxon>
        <taxon>Poales</taxon>
        <taxon>Poaceae</taxon>
        <taxon>BOP clade</taxon>
        <taxon>Oryzoideae</taxon>
        <taxon>Oryzeae</taxon>
        <taxon>Oryzinae</taxon>
        <taxon>Oryza</taxon>
        <taxon>Oryza sativa</taxon>
    </lineage>
</organism>
<reference key="1">
    <citation type="journal article" date="2005" name="Nature">
        <title>The map-based sequence of the rice genome.</title>
        <authorList>
            <consortium name="International rice genome sequencing project (IRGSP)"/>
        </authorList>
    </citation>
    <scope>NUCLEOTIDE SEQUENCE [LARGE SCALE GENOMIC DNA]</scope>
    <source>
        <strain>cv. Nipponbare</strain>
    </source>
</reference>
<reference key="2">
    <citation type="journal article" date="2008" name="Nucleic Acids Res.">
        <title>The rice annotation project database (RAP-DB): 2008 update.</title>
        <authorList>
            <consortium name="The rice annotation project (RAP)"/>
        </authorList>
    </citation>
    <scope>GENOME REANNOTATION</scope>
    <source>
        <strain>cv. Nipponbare</strain>
    </source>
</reference>
<reference key="3">
    <citation type="journal article" date="2013" name="Rice">
        <title>Improvement of the Oryza sativa Nipponbare reference genome using next generation sequence and optical map data.</title>
        <authorList>
            <person name="Kawahara Y."/>
            <person name="de la Bastide M."/>
            <person name="Hamilton J.P."/>
            <person name="Kanamori H."/>
            <person name="McCombie W.R."/>
            <person name="Ouyang S."/>
            <person name="Schwartz D.C."/>
            <person name="Tanaka T."/>
            <person name="Wu J."/>
            <person name="Zhou S."/>
            <person name="Childs K.L."/>
            <person name="Davidson R.M."/>
            <person name="Lin H."/>
            <person name="Quesada-Ocampo L."/>
            <person name="Vaillancourt B."/>
            <person name="Sakai H."/>
            <person name="Lee S.S."/>
            <person name="Kim J."/>
            <person name="Numa H."/>
            <person name="Itoh T."/>
            <person name="Buell C.R."/>
            <person name="Matsumoto T."/>
        </authorList>
    </citation>
    <scope>GENOME REANNOTATION</scope>
    <source>
        <strain>cv. Nipponbare</strain>
    </source>
</reference>
<reference key="4">
    <citation type="journal article" date="2005" name="PLoS Biol.">
        <title>The genomes of Oryza sativa: a history of duplications.</title>
        <authorList>
            <person name="Yu J."/>
            <person name="Wang J."/>
            <person name="Lin W."/>
            <person name="Li S."/>
            <person name="Li H."/>
            <person name="Zhou J."/>
            <person name="Ni P."/>
            <person name="Dong W."/>
            <person name="Hu S."/>
            <person name="Zeng C."/>
            <person name="Zhang J."/>
            <person name="Zhang Y."/>
            <person name="Li R."/>
            <person name="Xu Z."/>
            <person name="Li S."/>
            <person name="Li X."/>
            <person name="Zheng H."/>
            <person name="Cong L."/>
            <person name="Lin L."/>
            <person name="Yin J."/>
            <person name="Geng J."/>
            <person name="Li G."/>
            <person name="Shi J."/>
            <person name="Liu J."/>
            <person name="Lv H."/>
            <person name="Li J."/>
            <person name="Wang J."/>
            <person name="Deng Y."/>
            <person name="Ran L."/>
            <person name="Shi X."/>
            <person name="Wang X."/>
            <person name="Wu Q."/>
            <person name="Li C."/>
            <person name="Ren X."/>
            <person name="Wang J."/>
            <person name="Wang X."/>
            <person name="Li D."/>
            <person name="Liu D."/>
            <person name="Zhang X."/>
            <person name="Ji Z."/>
            <person name="Zhao W."/>
            <person name="Sun Y."/>
            <person name="Zhang Z."/>
            <person name="Bao J."/>
            <person name="Han Y."/>
            <person name="Dong L."/>
            <person name="Ji J."/>
            <person name="Chen P."/>
            <person name="Wu S."/>
            <person name="Liu J."/>
            <person name="Xiao Y."/>
            <person name="Bu D."/>
            <person name="Tan J."/>
            <person name="Yang L."/>
            <person name="Ye C."/>
            <person name="Zhang J."/>
            <person name="Xu J."/>
            <person name="Zhou Y."/>
            <person name="Yu Y."/>
            <person name="Zhang B."/>
            <person name="Zhuang S."/>
            <person name="Wei H."/>
            <person name="Liu B."/>
            <person name="Lei M."/>
            <person name="Yu H."/>
            <person name="Li Y."/>
            <person name="Xu H."/>
            <person name="Wei S."/>
            <person name="He X."/>
            <person name="Fang L."/>
            <person name="Zhang Z."/>
            <person name="Zhang Y."/>
            <person name="Huang X."/>
            <person name="Su Z."/>
            <person name="Tong W."/>
            <person name="Li J."/>
            <person name="Tong Z."/>
            <person name="Li S."/>
            <person name="Ye J."/>
            <person name="Wang L."/>
            <person name="Fang L."/>
            <person name="Lei T."/>
            <person name="Chen C.-S."/>
            <person name="Chen H.-C."/>
            <person name="Xu Z."/>
            <person name="Li H."/>
            <person name="Huang H."/>
            <person name="Zhang F."/>
            <person name="Xu H."/>
            <person name="Li N."/>
            <person name="Zhao C."/>
            <person name="Li S."/>
            <person name="Dong L."/>
            <person name="Huang Y."/>
            <person name="Li L."/>
            <person name="Xi Y."/>
            <person name="Qi Q."/>
            <person name="Li W."/>
            <person name="Zhang B."/>
            <person name="Hu W."/>
            <person name="Zhang Y."/>
            <person name="Tian X."/>
            <person name="Jiao Y."/>
            <person name="Liang X."/>
            <person name="Jin J."/>
            <person name="Gao L."/>
            <person name="Zheng W."/>
            <person name="Hao B."/>
            <person name="Liu S.-M."/>
            <person name="Wang W."/>
            <person name="Yuan L."/>
            <person name="Cao M."/>
            <person name="McDermott J."/>
            <person name="Samudrala R."/>
            <person name="Wang J."/>
            <person name="Wong G.K.-S."/>
            <person name="Yang H."/>
        </authorList>
    </citation>
    <scope>NUCLEOTIDE SEQUENCE [LARGE SCALE GENOMIC DNA]</scope>
    <source>
        <strain>cv. Nipponbare</strain>
    </source>
</reference>
<reference key="5">
    <citation type="journal article" date="2004" name="Plant Physiol.">
        <title>Calcium sensors and their interacting protein kinases: genomics of the Arabidopsis and rice CBL-CIPK signaling networks.</title>
        <authorList>
            <person name="Kolukisaoglu U."/>
            <person name="Weinl S."/>
            <person name="Blazevic D."/>
            <person name="Batistic O."/>
            <person name="Kudla J."/>
        </authorList>
    </citation>
    <scope>GENE FAMILY</scope>
    <scope>NOMENCLATURE</scope>
</reference>
<reference key="6">
    <citation type="journal article" date="2007" name="Plant Physiol.">
        <title>Characterization of stress-responsive CIPK genes in rice for stress tolerance improvement.</title>
        <authorList>
            <person name="Xiang Y."/>
            <person name="Huang Y."/>
            <person name="Xiong L."/>
        </authorList>
    </citation>
    <scope>INDUCTION</scope>
</reference>
<evidence type="ECO:0000250" key="1"/>
<evidence type="ECO:0000255" key="2">
    <source>
        <dbReference type="PROSITE-ProRule" id="PRU00159"/>
    </source>
</evidence>
<evidence type="ECO:0000255" key="3">
    <source>
        <dbReference type="PROSITE-ProRule" id="PRU00256"/>
    </source>
</evidence>
<evidence type="ECO:0000255" key="4">
    <source>
        <dbReference type="PROSITE-ProRule" id="PRU10027"/>
    </source>
</evidence>
<evidence type="ECO:0000305" key="5"/>
<accession>Q8LIG4</accession>
<accession>A0A0N7KP33</accession>